<gene>
    <name evidence="1" type="primary">atpE</name>
    <name type="ordered locus">BAD_1432</name>
</gene>
<evidence type="ECO:0000255" key="1">
    <source>
        <dbReference type="HAMAP-Rule" id="MF_01396"/>
    </source>
</evidence>
<reference key="1">
    <citation type="submission" date="2006-12" db="EMBL/GenBank/DDBJ databases">
        <title>Bifidobacterium adolescentis complete genome sequence.</title>
        <authorList>
            <person name="Suzuki T."/>
            <person name="Tsuda Y."/>
            <person name="Kanou N."/>
            <person name="Inoue T."/>
            <person name="Kumazaki K."/>
            <person name="Nagano S."/>
            <person name="Hirai S."/>
            <person name="Tanaka K."/>
            <person name="Watanabe K."/>
        </authorList>
    </citation>
    <scope>NUCLEOTIDE SEQUENCE [LARGE SCALE GENOMIC DNA]</scope>
    <source>
        <strain>ATCC 15703 / DSM 20083 / NCTC 11814 / E194a</strain>
    </source>
</reference>
<name>ATPL_BIFAA</name>
<sequence length="75" mass="7726">MDIVTLAEVAGNLNVVGYGLAAIGPGIGLGILIGKTIEGTARQPELGSRLQTLMFLGLAFVEVLALLGFVLAFIK</sequence>
<protein>
    <recommendedName>
        <fullName evidence="1">ATP synthase subunit c</fullName>
    </recommendedName>
    <alternativeName>
        <fullName evidence="1">ATP synthase F(0) sector subunit c</fullName>
    </alternativeName>
    <alternativeName>
        <fullName evidence="1">F-type ATPase subunit c</fullName>
        <shortName evidence="1">F-ATPase subunit c</shortName>
    </alternativeName>
    <alternativeName>
        <fullName evidence="1">Lipid-binding protein</fullName>
    </alternativeName>
</protein>
<organism>
    <name type="scientific">Bifidobacterium adolescentis (strain ATCC 15703 / DSM 20083 / NCTC 11814 / E194a)</name>
    <dbReference type="NCBI Taxonomy" id="367928"/>
    <lineage>
        <taxon>Bacteria</taxon>
        <taxon>Bacillati</taxon>
        <taxon>Actinomycetota</taxon>
        <taxon>Actinomycetes</taxon>
        <taxon>Bifidobacteriales</taxon>
        <taxon>Bifidobacteriaceae</taxon>
        <taxon>Bifidobacterium</taxon>
    </lineage>
</organism>
<dbReference type="EMBL" id="AP009256">
    <property type="protein sequence ID" value="BAF40213.1"/>
    <property type="molecule type" value="Genomic_DNA"/>
</dbReference>
<dbReference type="RefSeq" id="WP_003809874.1">
    <property type="nucleotide sequence ID" value="NZ_CAXVNC010000003.1"/>
</dbReference>
<dbReference type="SMR" id="A1A3D0"/>
<dbReference type="STRING" id="367928.BAD_1432"/>
<dbReference type="PaxDb" id="1680-BADO_1599"/>
<dbReference type="GeneID" id="97502967"/>
<dbReference type="KEGG" id="bad:BAD_1432"/>
<dbReference type="HOGENOM" id="CLU_148047_5_2_11"/>
<dbReference type="Proteomes" id="UP000008702">
    <property type="component" value="Chromosome"/>
</dbReference>
<dbReference type="GO" id="GO:0005886">
    <property type="term" value="C:plasma membrane"/>
    <property type="evidence" value="ECO:0007669"/>
    <property type="project" value="UniProtKB-SubCell"/>
</dbReference>
<dbReference type="GO" id="GO:0045259">
    <property type="term" value="C:proton-transporting ATP synthase complex"/>
    <property type="evidence" value="ECO:0007669"/>
    <property type="project" value="UniProtKB-KW"/>
</dbReference>
<dbReference type="GO" id="GO:0033177">
    <property type="term" value="C:proton-transporting two-sector ATPase complex, proton-transporting domain"/>
    <property type="evidence" value="ECO:0007669"/>
    <property type="project" value="InterPro"/>
</dbReference>
<dbReference type="GO" id="GO:0008289">
    <property type="term" value="F:lipid binding"/>
    <property type="evidence" value="ECO:0007669"/>
    <property type="project" value="UniProtKB-KW"/>
</dbReference>
<dbReference type="GO" id="GO:0046933">
    <property type="term" value="F:proton-transporting ATP synthase activity, rotational mechanism"/>
    <property type="evidence" value="ECO:0007669"/>
    <property type="project" value="UniProtKB-UniRule"/>
</dbReference>
<dbReference type="CDD" id="cd18121">
    <property type="entry name" value="ATP-synt_Fo_c"/>
    <property type="match status" value="1"/>
</dbReference>
<dbReference type="FunFam" id="1.20.20.10:FF:000002">
    <property type="entry name" value="ATP synthase subunit c"/>
    <property type="match status" value="1"/>
</dbReference>
<dbReference type="Gene3D" id="1.20.20.10">
    <property type="entry name" value="F1F0 ATP synthase subunit C"/>
    <property type="match status" value="1"/>
</dbReference>
<dbReference type="HAMAP" id="MF_01396">
    <property type="entry name" value="ATP_synth_c_bact"/>
    <property type="match status" value="1"/>
</dbReference>
<dbReference type="InterPro" id="IPR005953">
    <property type="entry name" value="ATP_synth_csu_bac/chlpt"/>
</dbReference>
<dbReference type="InterPro" id="IPR000454">
    <property type="entry name" value="ATP_synth_F0_csu"/>
</dbReference>
<dbReference type="InterPro" id="IPR020537">
    <property type="entry name" value="ATP_synth_F0_csu_DDCD_BS"/>
</dbReference>
<dbReference type="InterPro" id="IPR038662">
    <property type="entry name" value="ATP_synth_F0_csu_sf"/>
</dbReference>
<dbReference type="InterPro" id="IPR002379">
    <property type="entry name" value="ATPase_proteolipid_c-like_dom"/>
</dbReference>
<dbReference type="InterPro" id="IPR035921">
    <property type="entry name" value="F/V-ATP_Csub_sf"/>
</dbReference>
<dbReference type="NCBIfam" id="TIGR01260">
    <property type="entry name" value="ATP_synt_c"/>
    <property type="match status" value="1"/>
</dbReference>
<dbReference type="PANTHER" id="PTHR10031">
    <property type="entry name" value="ATP SYNTHASE LIPID-BINDING PROTEIN, MITOCHONDRIAL"/>
    <property type="match status" value="1"/>
</dbReference>
<dbReference type="PANTHER" id="PTHR10031:SF0">
    <property type="entry name" value="ATPASE PROTEIN 9"/>
    <property type="match status" value="1"/>
</dbReference>
<dbReference type="Pfam" id="PF00137">
    <property type="entry name" value="ATP-synt_C"/>
    <property type="match status" value="1"/>
</dbReference>
<dbReference type="PRINTS" id="PR00124">
    <property type="entry name" value="ATPASEC"/>
</dbReference>
<dbReference type="SUPFAM" id="SSF81333">
    <property type="entry name" value="F1F0 ATP synthase subunit C"/>
    <property type="match status" value="1"/>
</dbReference>
<dbReference type="PROSITE" id="PS00605">
    <property type="entry name" value="ATPASE_C"/>
    <property type="match status" value="1"/>
</dbReference>
<proteinExistence type="inferred from homology"/>
<comment type="function">
    <text evidence="1">F(1)F(0) ATP synthase produces ATP from ADP in the presence of a proton or sodium gradient. F-type ATPases consist of two structural domains, F(1) containing the extramembraneous catalytic core and F(0) containing the membrane proton channel, linked together by a central stalk and a peripheral stalk. During catalysis, ATP synthesis in the catalytic domain of F(1) is coupled via a rotary mechanism of the central stalk subunits to proton translocation.</text>
</comment>
<comment type="function">
    <text evidence="1">Key component of the F(0) channel; it plays a direct role in translocation across the membrane. A homomeric c-ring of between 10-14 subunits forms the central stalk rotor element with the F(1) delta and epsilon subunits.</text>
</comment>
<comment type="subunit">
    <text evidence="1">F-type ATPases have 2 components, F(1) - the catalytic core - and F(0) - the membrane proton channel. F(1) has five subunits: alpha(3), beta(3), gamma(1), delta(1), epsilon(1). F(0) has three main subunits: a(1), b(2) and c(10-14). The alpha and beta chains form an alternating ring which encloses part of the gamma chain. F(1) is attached to F(0) by a central stalk formed by the gamma and epsilon chains, while a peripheral stalk is formed by the delta and b chains.</text>
</comment>
<comment type="subcellular location">
    <subcellularLocation>
        <location evidence="1">Cell membrane</location>
        <topology evidence="1">Multi-pass membrane protein</topology>
    </subcellularLocation>
</comment>
<comment type="similarity">
    <text evidence="1">Belongs to the ATPase C chain family.</text>
</comment>
<keyword id="KW-0066">ATP synthesis</keyword>
<keyword id="KW-1003">Cell membrane</keyword>
<keyword id="KW-0138">CF(0)</keyword>
<keyword id="KW-0375">Hydrogen ion transport</keyword>
<keyword id="KW-0406">Ion transport</keyword>
<keyword id="KW-0446">Lipid-binding</keyword>
<keyword id="KW-0472">Membrane</keyword>
<keyword id="KW-1185">Reference proteome</keyword>
<keyword id="KW-0812">Transmembrane</keyword>
<keyword id="KW-1133">Transmembrane helix</keyword>
<keyword id="KW-0813">Transport</keyword>
<accession>A1A3D0</accession>
<feature type="chain" id="PRO_0000365854" description="ATP synthase subunit c">
    <location>
        <begin position="1"/>
        <end position="75"/>
    </location>
</feature>
<feature type="transmembrane region" description="Helical" evidence="1">
    <location>
        <begin position="13"/>
        <end position="33"/>
    </location>
</feature>
<feature type="transmembrane region" description="Helical" evidence="1">
    <location>
        <begin position="54"/>
        <end position="74"/>
    </location>
</feature>
<feature type="site" description="Reversibly protonated during proton transport" evidence="1">
    <location>
        <position position="62"/>
    </location>
</feature>